<keyword id="KW-0227">DNA damage</keyword>
<keyword id="KW-0234">DNA repair</keyword>
<keyword id="KW-0378">Hydrolase</keyword>
<reference key="1">
    <citation type="journal article" date="2009" name="J. Bacteriol.">
        <title>Complete genome sequence of the extremophilic Bacillus cereus strain Q1 with industrial applications.</title>
        <authorList>
            <person name="Xiong Z."/>
            <person name="Jiang Y."/>
            <person name="Qi D."/>
            <person name="Lu H."/>
            <person name="Yang F."/>
            <person name="Yang J."/>
            <person name="Chen L."/>
            <person name="Sun L."/>
            <person name="Xu X."/>
            <person name="Xue Y."/>
            <person name="Zhu Y."/>
            <person name="Jin Q."/>
        </authorList>
    </citation>
    <scope>NUCLEOTIDE SEQUENCE [LARGE SCALE GENOMIC DNA]</scope>
    <source>
        <strain>Q1</strain>
    </source>
</reference>
<feature type="chain" id="PRO_1000146262" description="Putative 3-methyladenine DNA glycosylase">
    <location>
        <begin position="1"/>
        <end position="205"/>
    </location>
</feature>
<protein>
    <recommendedName>
        <fullName evidence="1">Putative 3-methyladenine DNA glycosylase</fullName>
        <ecNumber evidence="1">3.2.2.-</ecNumber>
    </recommendedName>
</protein>
<comment type="similarity">
    <text evidence="1">Belongs to the DNA glycosylase MPG family.</text>
</comment>
<evidence type="ECO:0000255" key="1">
    <source>
        <dbReference type="HAMAP-Rule" id="MF_00527"/>
    </source>
</evidence>
<sequence>MQAPPSFYEGDTLEVAKKLLGQKLVHIVDGIKRSGIIVEVEAYKGPGDKAAHSYGGRRTDRTEVMFGAPGHAYVYLIYGMYHCFNVITAPVGTPQGVLIRALEPVDGIEEIKLARYNKTDITKAQYKNLTNGPGKLCRALGITLEERGVSLQSDTLHIELVPEEEHISSQYKITAGPRINIDYAEEAVHYPWRFYYEGHPFVSKK</sequence>
<dbReference type="EC" id="3.2.2.-" evidence="1"/>
<dbReference type="EMBL" id="CP000227">
    <property type="protein sequence ID" value="ACM11389.1"/>
    <property type="molecule type" value="Genomic_DNA"/>
</dbReference>
<dbReference type="SMR" id="B9IRB4"/>
<dbReference type="KEGG" id="bcq:BCQ_0959"/>
<dbReference type="HOGENOM" id="CLU_060471_0_2_9"/>
<dbReference type="Proteomes" id="UP000000441">
    <property type="component" value="Chromosome"/>
</dbReference>
<dbReference type="GO" id="GO:0003905">
    <property type="term" value="F:alkylbase DNA N-glycosylase activity"/>
    <property type="evidence" value="ECO:0007669"/>
    <property type="project" value="InterPro"/>
</dbReference>
<dbReference type="GO" id="GO:0003677">
    <property type="term" value="F:DNA binding"/>
    <property type="evidence" value="ECO:0007669"/>
    <property type="project" value="InterPro"/>
</dbReference>
<dbReference type="GO" id="GO:0006284">
    <property type="term" value="P:base-excision repair"/>
    <property type="evidence" value="ECO:0007669"/>
    <property type="project" value="InterPro"/>
</dbReference>
<dbReference type="CDD" id="cd00540">
    <property type="entry name" value="AAG"/>
    <property type="match status" value="1"/>
</dbReference>
<dbReference type="FunFam" id="3.10.300.10:FF:000001">
    <property type="entry name" value="Putative 3-methyladenine DNA glycosylase"/>
    <property type="match status" value="1"/>
</dbReference>
<dbReference type="Gene3D" id="3.10.300.10">
    <property type="entry name" value="Methylpurine-DNA glycosylase (MPG)"/>
    <property type="match status" value="1"/>
</dbReference>
<dbReference type="HAMAP" id="MF_00527">
    <property type="entry name" value="3MGH"/>
    <property type="match status" value="1"/>
</dbReference>
<dbReference type="InterPro" id="IPR011034">
    <property type="entry name" value="Formyl_transferase-like_C_sf"/>
</dbReference>
<dbReference type="InterPro" id="IPR003180">
    <property type="entry name" value="MPG"/>
</dbReference>
<dbReference type="InterPro" id="IPR036995">
    <property type="entry name" value="MPG_sf"/>
</dbReference>
<dbReference type="NCBIfam" id="TIGR00567">
    <property type="entry name" value="3mg"/>
    <property type="match status" value="1"/>
</dbReference>
<dbReference type="NCBIfam" id="NF002001">
    <property type="entry name" value="PRK00802.1-1"/>
    <property type="match status" value="1"/>
</dbReference>
<dbReference type="NCBIfam" id="NF002003">
    <property type="entry name" value="PRK00802.1-3"/>
    <property type="match status" value="1"/>
</dbReference>
<dbReference type="PANTHER" id="PTHR10429">
    <property type="entry name" value="DNA-3-METHYLADENINE GLYCOSYLASE"/>
    <property type="match status" value="1"/>
</dbReference>
<dbReference type="PANTHER" id="PTHR10429:SF0">
    <property type="entry name" value="DNA-3-METHYLADENINE GLYCOSYLASE"/>
    <property type="match status" value="1"/>
</dbReference>
<dbReference type="Pfam" id="PF02245">
    <property type="entry name" value="Pur_DNA_glyco"/>
    <property type="match status" value="1"/>
</dbReference>
<dbReference type="SUPFAM" id="SSF50486">
    <property type="entry name" value="FMT C-terminal domain-like"/>
    <property type="match status" value="1"/>
</dbReference>
<accession>B9IRB4</accession>
<proteinExistence type="inferred from homology"/>
<organism>
    <name type="scientific">Bacillus cereus (strain Q1)</name>
    <dbReference type="NCBI Taxonomy" id="361100"/>
    <lineage>
        <taxon>Bacteria</taxon>
        <taxon>Bacillati</taxon>
        <taxon>Bacillota</taxon>
        <taxon>Bacilli</taxon>
        <taxon>Bacillales</taxon>
        <taxon>Bacillaceae</taxon>
        <taxon>Bacillus</taxon>
        <taxon>Bacillus cereus group</taxon>
    </lineage>
</organism>
<name>3MGH_BACCQ</name>
<gene>
    <name type="ordered locus">BCQ_0959</name>
</gene>